<gene>
    <name evidence="1" type="primary">dinB</name>
    <name type="ordered locus">Lm4b_01987</name>
</gene>
<accession>C1KWR9</accession>
<comment type="function">
    <text evidence="1">Poorly processive, error-prone DNA polymerase involved in untargeted mutagenesis. Copies undamaged DNA at stalled replication forks, which arise in vivo from mismatched or misaligned primer ends. These misaligned primers can be extended by PolIV. Exhibits no 3'-5' exonuclease (proofreading) activity. May be involved in translesional synthesis, in conjunction with the beta clamp from PolIII.</text>
</comment>
<comment type="catalytic activity">
    <reaction evidence="1">
        <text>DNA(n) + a 2'-deoxyribonucleoside 5'-triphosphate = DNA(n+1) + diphosphate</text>
        <dbReference type="Rhea" id="RHEA:22508"/>
        <dbReference type="Rhea" id="RHEA-COMP:17339"/>
        <dbReference type="Rhea" id="RHEA-COMP:17340"/>
        <dbReference type="ChEBI" id="CHEBI:33019"/>
        <dbReference type="ChEBI" id="CHEBI:61560"/>
        <dbReference type="ChEBI" id="CHEBI:173112"/>
        <dbReference type="EC" id="2.7.7.7"/>
    </reaction>
</comment>
<comment type="cofactor">
    <cofactor evidence="1">
        <name>Mg(2+)</name>
        <dbReference type="ChEBI" id="CHEBI:18420"/>
    </cofactor>
    <text evidence="1">Binds 2 magnesium ions per subunit.</text>
</comment>
<comment type="subunit">
    <text evidence="1">Monomer.</text>
</comment>
<comment type="subcellular location">
    <subcellularLocation>
        <location evidence="1">Cytoplasm</location>
    </subcellularLocation>
</comment>
<comment type="similarity">
    <text evidence="1">Belongs to the DNA polymerase type-Y family.</text>
</comment>
<sequence length="356" mass="40522">MDTSRKIIHIDMDAFYASVEQRDHPEFRGKPLIIGGDPNKRGVVATCSYEARKFGVHSAMPTRQAAKLCPNGIFIHGNMAHYVEVSNQIREIFSRYTDIIEPLSLDEAYLDVTENKKGMKSATMVAREIQQTIYQELGLTASAGVSFNKFIAKIASDFKKPAGITVVTPEEAEAFLEQIPVTKFYGVGKVTAEKLHRLGIETGADLKKWSEWDLIRELHKHGYHLYRHVRGRSNNIVNPHRDRKSVGKETTFEFNVLDSRVLEQSLMQFAKKVEERLIKLQKHGKTVVLKLRYSDFTTITKRLTLNEYTNDASQIYQAAALLLRESYTGQDSIRLIGLTVTNLKPVYFENLRLEGL</sequence>
<name>DPO4_LISMC</name>
<organism>
    <name type="scientific">Listeria monocytogenes serotype 4b (strain CLIP80459)</name>
    <dbReference type="NCBI Taxonomy" id="568819"/>
    <lineage>
        <taxon>Bacteria</taxon>
        <taxon>Bacillati</taxon>
        <taxon>Bacillota</taxon>
        <taxon>Bacilli</taxon>
        <taxon>Bacillales</taxon>
        <taxon>Listeriaceae</taxon>
        <taxon>Listeria</taxon>
    </lineage>
</organism>
<dbReference type="EC" id="2.7.7.7" evidence="1"/>
<dbReference type="EMBL" id="FM242711">
    <property type="protein sequence ID" value="CAS05744.1"/>
    <property type="molecule type" value="Genomic_DNA"/>
</dbReference>
<dbReference type="RefSeq" id="WP_003725867.1">
    <property type="nucleotide sequence ID" value="NC_012488.1"/>
</dbReference>
<dbReference type="SMR" id="C1KWR9"/>
<dbReference type="KEGG" id="lmc:Lm4b_01987"/>
<dbReference type="HOGENOM" id="CLU_012348_1_2_9"/>
<dbReference type="GO" id="GO:0005829">
    <property type="term" value="C:cytosol"/>
    <property type="evidence" value="ECO:0007669"/>
    <property type="project" value="TreeGrafter"/>
</dbReference>
<dbReference type="GO" id="GO:0003684">
    <property type="term" value="F:damaged DNA binding"/>
    <property type="evidence" value="ECO:0007669"/>
    <property type="project" value="InterPro"/>
</dbReference>
<dbReference type="GO" id="GO:0003887">
    <property type="term" value="F:DNA-directed DNA polymerase activity"/>
    <property type="evidence" value="ECO:0007669"/>
    <property type="project" value="UniProtKB-UniRule"/>
</dbReference>
<dbReference type="GO" id="GO:0000287">
    <property type="term" value="F:magnesium ion binding"/>
    <property type="evidence" value="ECO:0007669"/>
    <property type="project" value="UniProtKB-UniRule"/>
</dbReference>
<dbReference type="GO" id="GO:0006261">
    <property type="term" value="P:DNA-templated DNA replication"/>
    <property type="evidence" value="ECO:0007669"/>
    <property type="project" value="UniProtKB-UniRule"/>
</dbReference>
<dbReference type="GO" id="GO:0042276">
    <property type="term" value="P:error-prone translesion synthesis"/>
    <property type="evidence" value="ECO:0007669"/>
    <property type="project" value="TreeGrafter"/>
</dbReference>
<dbReference type="GO" id="GO:0009432">
    <property type="term" value="P:SOS response"/>
    <property type="evidence" value="ECO:0007669"/>
    <property type="project" value="TreeGrafter"/>
</dbReference>
<dbReference type="CDD" id="cd03586">
    <property type="entry name" value="PolY_Pol_IV_kappa"/>
    <property type="match status" value="1"/>
</dbReference>
<dbReference type="FunFam" id="1.10.150.20:FF:000062">
    <property type="entry name" value="DNA polymerase IV"/>
    <property type="match status" value="1"/>
</dbReference>
<dbReference type="FunFam" id="3.30.1490.100:FF:000004">
    <property type="entry name" value="DNA polymerase IV"/>
    <property type="match status" value="1"/>
</dbReference>
<dbReference type="FunFam" id="3.30.70.270:FF:000002">
    <property type="entry name" value="DNA polymerase IV"/>
    <property type="match status" value="1"/>
</dbReference>
<dbReference type="FunFam" id="3.40.1170.60:FF:000001">
    <property type="entry name" value="DNA polymerase IV"/>
    <property type="match status" value="1"/>
</dbReference>
<dbReference type="Gene3D" id="3.30.70.270">
    <property type="match status" value="1"/>
</dbReference>
<dbReference type="Gene3D" id="3.40.1170.60">
    <property type="match status" value="1"/>
</dbReference>
<dbReference type="Gene3D" id="1.10.150.20">
    <property type="entry name" value="5' to 3' exonuclease, C-terminal subdomain"/>
    <property type="match status" value="1"/>
</dbReference>
<dbReference type="Gene3D" id="3.30.1490.100">
    <property type="entry name" value="DNA polymerase, Y-family, little finger domain"/>
    <property type="match status" value="1"/>
</dbReference>
<dbReference type="HAMAP" id="MF_01113">
    <property type="entry name" value="DNApol_IV"/>
    <property type="match status" value="1"/>
</dbReference>
<dbReference type="InterPro" id="IPR043502">
    <property type="entry name" value="DNA/RNA_pol_sf"/>
</dbReference>
<dbReference type="InterPro" id="IPR036775">
    <property type="entry name" value="DNA_pol_Y-fam_lit_finger_sf"/>
</dbReference>
<dbReference type="InterPro" id="IPR017961">
    <property type="entry name" value="DNA_pol_Y-fam_little_finger"/>
</dbReference>
<dbReference type="InterPro" id="IPR050116">
    <property type="entry name" value="DNA_polymerase-Y"/>
</dbReference>
<dbReference type="InterPro" id="IPR022880">
    <property type="entry name" value="DNApol_IV"/>
</dbReference>
<dbReference type="InterPro" id="IPR024728">
    <property type="entry name" value="PolY_HhH_motif"/>
</dbReference>
<dbReference type="InterPro" id="IPR043128">
    <property type="entry name" value="Rev_trsase/Diguanyl_cyclase"/>
</dbReference>
<dbReference type="InterPro" id="IPR001126">
    <property type="entry name" value="UmuC"/>
</dbReference>
<dbReference type="NCBIfam" id="NF002677">
    <property type="entry name" value="PRK02406.1"/>
    <property type="match status" value="1"/>
</dbReference>
<dbReference type="NCBIfam" id="NF010731">
    <property type="entry name" value="PRK14133.1"/>
    <property type="match status" value="1"/>
</dbReference>
<dbReference type="PANTHER" id="PTHR11076:SF33">
    <property type="entry name" value="DNA POLYMERASE KAPPA"/>
    <property type="match status" value="1"/>
</dbReference>
<dbReference type="PANTHER" id="PTHR11076">
    <property type="entry name" value="DNA REPAIR POLYMERASE UMUC / TRANSFERASE FAMILY MEMBER"/>
    <property type="match status" value="1"/>
</dbReference>
<dbReference type="Pfam" id="PF00817">
    <property type="entry name" value="IMS"/>
    <property type="match status" value="1"/>
</dbReference>
<dbReference type="Pfam" id="PF11799">
    <property type="entry name" value="IMS_C"/>
    <property type="match status" value="1"/>
</dbReference>
<dbReference type="Pfam" id="PF11798">
    <property type="entry name" value="IMS_HHH"/>
    <property type="match status" value="1"/>
</dbReference>
<dbReference type="SUPFAM" id="SSF56672">
    <property type="entry name" value="DNA/RNA polymerases"/>
    <property type="match status" value="1"/>
</dbReference>
<dbReference type="SUPFAM" id="SSF100879">
    <property type="entry name" value="Lesion bypass DNA polymerase (Y-family), little finger domain"/>
    <property type="match status" value="1"/>
</dbReference>
<dbReference type="PROSITE" id="PS50173">
    <property type="entry name" value="UMUC"/>
    <property type="match status" value="1"/>
</dbReference>
<keyword id="KW-0963">Cytoplasm</keyword>
<keyword id="KW-0227">DNA damage</keyword>
<keyword id="KW-0234">DNA repair</keyword>
<keyword id="KW-0235">DNA replication</keyword>
<keyword id="KW-0238">DNA-binding</keyword>
<keyword id="KW-0239">DNA-directed DNA polymerase</keyword>
<keyword id="KW-0460">Magnesium</keyword>
<keyword id="KW-0479">Metal-binding</keyword>
<keyword id="KW-0515">Mutator protein</keyword>
<keyword id="KW-0548">Nucleotidyltransferase</keyword>
<keyword id="KW-0808">Transferase</keyword>
<protein>
    <recommendedName>
        <fullName evidence="1">DNA polymerase IV</fullName>
        <shortName evidence="1">Pol IV</shortName>
        <ecNumber evidence="1">2.7.7.7</ecNumber>
    </recommendedName>
</protein>
<evidence type="ECO:0000255" key="1">
    <source>
        <dbReference type="HAMAP-Rule" id="MF_01113"/>
    </source>
</evidence>
<proteinExistence type="inferred from homology"/>
<feature type="chain" id="PRO_1000213589" description="DNA polymerase IV">
    <location>
        <begin position="1"/>
        <end position="356"/>
    </location>
</feature>
<feature type="domain" description="UmuC" evidence="1">
    <location>
        <begin position="7"/>
        <end position="188"/>
    </location>
</feature>
<feature type="active site" evidence="1">
    <location>
        <position position="107"/>
    </location>
</feature>
<feature type="binding site" evidence="1">
    <location>
        <position position="11"/>
    </location>
    <ligand>
        <name>Mg(2+)</name>
        <dbReference type="ChEBI" id="CHEBI:18420"/>
    </ligand>
</feature>
<feature type="binding site" evidence="1">
    <location>
        <position position="106"/>
    </location>
    <ligand>
        <name>Mg(2+)</name>
        <dbReference type="ChEBI" id="CHEBI:18420"/>
    </ligand>
</feature>
<feature type="site" description="Substrate discrimination" evidence="1">
    <location>
        <position position="16"/>
    </location>
</feature>
<reference key="1">
    <citation type="journal article" date="2012" name="BMC Genomics">
        <title>Comparative genomics and transcriptomics of lineages I, II, and III strains of Listeria monocytogenes.</title>
        <authorList>
            <person name="Hain T."/>
            <person name="Ghai R."/>
            <person name="Billion A."/>
            <person name="Kuenne C.T."/>
            <person name="Steinweg C."/>
            <person name="Izar B."/>
            <person name="Mohamed W."/>
            <person name="Mraheil M."/>
            <person name="Domann E."/>
            <person name="Schaffrath S."/>
            <person name="Karst U."/>
            <person name="Goesmann A."/>
            <person name="Oehm S."/>
            <person name="Puhler A."/>
            <person name="Merkl R."/>
            <person name="Vorwerk S."/>
            <person name="Glaser P."/>
            <person name="Garrido P."/>
            <person name="Rusniok C."/>
            <person name="Buchrieser C."/>
            <person name="Goebel W."/>
            <person name="Chakraborty T."/>
        </authorList>
    </citation>
    <scope>NUCLEOTIDE SEQUENCE [LARGE SCALE GENOMIC DNA]</scope>
    <source>
        <strain>CLIP80459</strain>
    </source>
</reference>